<keyword id="KW-0150">Chloroplast</keyword>
<keyword id="KW-0934">Plastid</keyword>
<keyword id="KW-0687">Ribonucleoprotein</keyword>
<keyword id="KW-0689">Ribosomal protein</keyword>
<keyword id="KW-0694">RNA-binding</keyword>
<keyword id="KW-0699">rRNA-binding</keyword>
<evidence type="ECO:0000250" key="1"/>
<evidence type="ECO:0000305" key="2"/>
<name>RR8_BARVE</name>
<accession>A4QKE0</accession>
<geneLocation type="chloroplast"/>
<proteinExistence type="inferred from homology"/>
<sequence>MGKDTIADIITSIRNADMNRKGTVRIGSTNITESIVKILLREGFIENVRKHRENNQYFLILTLRHRRNKKESYKTILNLKRISRPGLRIYSNSQRIPRILGGIGIVILSTSQGIMTDREARLKRIGGEILCYIW</sequence>
<comment type="function">
    <text evidence="1">One of the primary rRNA binding proteins, it binds directly to 16S rRNA central domain where it helps coordinate assembly of the platform of the 30S subunit.</text>
</comment>
<comment type="subunit">
    <text evidence="1">Part of the 30S ribosomal subunit.</text>
</comment>
<comment type="subcellular location">
    <subcellularLocation>
        <location>Plastid</location>
        <location>Chloroplast</location>
    </subcellularLocation>
</comment>
<comment type="similarity">
    <text evidence="2">Belongs to the universal ribosomal protein uS8 family.</text>
</comment>
<protein>
    <recommendedName>
        <fullName evidence="2">Small ribosomal subunit protein uS8c</fullName>
    </recommendedName>
    <alternativeName>
        <fullName>30S ribosomal protein S8, chloroplastic</fullName>
    </alternativeName>
</protein>
<feature type="chain" id="PRO_0000290976" description="Small ribosomal subunit protein uS8c">
    <location>
        <begin position="1"/>
        <end position="134"/>
    </location>
</feature>
<gene>
    <name type="primary">rps8</name>
</gene>
<reference key="1">
    <citation type="submission" date="2007-03" db="EMBL/GenBank/DDBJ databases">
        <title>Sequencing analysis of Barbarea verna chloroplast DNA.</title>
        <authorList>
            <person name="Hosouchi T."/>
            <person name="Tsuruoka H."/>
            <person name="Kotani H."/>
        </authorList>
    </citation>
    <scope>NUCLEOTIDE SEQUENCE [LARGE SCALE GENOMIC DNA]</scope>
</reference>
<organism>
    <name type="scientific">Barbarea verna</name>
    <name type="common">Land cress</name>
    <name type="synonym">Erysimum vernum</name>
    <dbReference type="NCBI Taxonomy" id="50458"/>
    <lineage>
        <taxon>Eukaryota</taxon>
        <taxon>Viridiplantae</taxon>
        <taxon>Streptophyta</taxon>
        <taxon>Embryophyta</taxon>
        <taxon>Tracheophyta</taxon>
        <taxon>Spermatophyta</taxon>
        <taxon>Magnoliopsida</taxon>
        <taxon>eudicotyledons</taxon>
        <taxon>Gunneridae</taxon>
        <taxon>Pentapetalae</taxon>
        <taxon>rosids</taxon>
        <taxon>malvids</taxon>
        <taxon>Brassicales</taxon>
        <taxon>Brassicaceae</taxon>
        <taxon>Cardamineae</taxon>
        <taxon>Barbarea</taxon>
    </lineage>
</organism>
<dbReference type="EMBL" id="AP009370">
    <property type="protein sequence ID" value="BAF50145.1"/>
    <property type="molecule type" value="Genomic_DNA"/>
</dbReference>
<dbReference type="RefSeq" id="YP_001123321.1">
    <property type="nucleotide sequence ID" value="NC_009269.1"/>
</dbReference>
<dbReference type="SMR" id="A4QKE0"/>
<dbReference type="GeneID" id="4961886"/>
<dbReference type="GO" id="GO:0009507">
    <property type="term" value="C:chloroplast"/>
    <property type="evidence" value="ECO:0007669"/>
    <property type="project" value="UniProtKB-SubCell"/>
</dbReference>
<dbReference type="GO" id="GO:1990904">
    <property type="term" value="C:ribonucleoprotein complex"/>
    <property type="evidence" value="ECO:0007669"/>
    <property type="project" value="UniProtKB-KW"/>
</dbReference>
<dbReference type="GO" id="GO:0005840">
    <property type="term" value="C:ribosome"/>
    <property type="evidence" value="ECO:0007669"/>
    <property type="project" value="UniProtKB-KW"/>
</dbReference>
<dbReference type="GO" id="GO:0019843">
    <property type="term" value="F:rRNA binding"/>
    <property type="evidence" value="ECO:0007669"/>
    <property type="project" value="UniProtKB-UniRule"/>
</dbReference>
<dbReference type="GO" id="GO:0003735">
    <property type="term" value="F:structural constituent of ribosome"/>
    <property type="evidence" value="ECO:0007669"/>
    <property type="project" value="InterPro"/>
</dbReference>
<dbReference type="GO" id="GO:0006412">
    <property type="term" value="P:translation"/>
    <property type="evidence" value="ECO:0007669"/>
    <property type="project" value="UniProtKB-UniRule"/>
</dbReference>
<dbReference type="FunFam" id="3.30.1490.10:FF:000001">
    <property type="entry name" value="30S ribosomal protein S8"/>
    <property type="match status" value="1"/>
</dbReference>
<dbReference type="FunFam" id="3.30.1370.30:FF:000004">
    <property type="entry name" value="30S ribosomal protein S8, chloroplastic"/>
    <property type="match status" value="1"/>
</dbReference>
<dbReference type="Gene3D" id="3.30.1370.30">
    <property type="match status" value="1"/>
</dbReference>
<dbReference type="Gene3D" id="3.30.1490.10">
    <property type="match status" value="1"/>
</dbReference>
<dbReference type="HAMAP" id="MF_01302_B">
    <property type="entry name" value="Ribosomal_uS8_B"/>
    <property type="match status" value="1"/>
</dbReference>
<dbReference type="InterPro" id="IPR000630">
    <property type="entry name" value="Ribosomal_uS8"/>
</dbReference>
<dbReference type="InterPro" id="IPR047863">
    <property type="entry name" value="Ribosomal_uS8_CS"/>
</dbReference>
<dbReference type="InterPro" id="IPR035987">
    <property type="entry name" value="Ribosomal_uS8_sf"/>
</dbReference>
<dbReference type="NCBIfam" id="NF001109">
    <property type="entry name" value="PRK00136.1"/>
    <property type="match status" value="1"/>
</dbReference>
<dbReference type="PANTHER" id="PTHR11758">
    <property type="entry name" value="40S RIBOSOMAL PROTEIN S15A"/>
    <property type="match status" value="1"/>
</dbReference>
<dbReference type="Pfam" id="PF00410">
    <property type="entry name" value="Ribosomal_S8"/>
    <property type="match status" value="1"/>
</dbReference>
<dbReference type="SUPFAM" id="SSF56047">
    <property type="entry name" value="Ribosomal protein S8"/>
    <property type="match status" value="1"/>
</dbReference>
<dbReference type="PROSITE" id="PS00053">
    <property type="entry name" value="RIBOSOMAL_S8"/>
    <property type="match status" value="1"/>
</dbReference>